<comment type="function">
    <text evidence="2">Involved in base excision repair of DNA damaged by oxidation or by mutagenic agents. Acts as a DNA glycosylase that recognizes and removes damaged bases. Has a preference for oxidized purines, such as 7,8-dihydro-8-oxoguanine (8-oxoG). Has AP (apurinic/apyrimidinic) lyase activity and introduces nicks in the DNA strand. Cleaves the DNA backbone by beta-delta elimination to generate a single-strand break at the site of the removed base with both 3'- and 5'-phosphates.</text>
</comment>
<comment type="catalytic activity">
    <reaction evidence="2">
        <text>Hydrolysis of DNA containing ring-opened 7-methylguanine residues, releasing 2,6-diamino-4-hydroxy-5-(N-methyl)formamidopyrimidine.</text>
        <dbReference type="EC" id="3.2.2.23"/>
    </reaction>
</comment>
<comment type="catalytic activity">
    <reaction evidence="2">
        <text>2'-deoxyribonucleotide-(2'-deoxyribose 5'-phosphate)-2'-deoxyribonucleotide-DNA = a 3'-end 2'-deoxyribonucleotide-(2,3-dehydro-2,3-deoxyribose 5'-phosphate)-DNA + a 5'-end 5'-phospho-2'-deoxyribonucleoside-DNA + H(+)</text>
        <dbReference type="Rhea" id="RHEA:66592"/>
        <dbReference type="Rhea" id="RHEA-COMP:13180"/>
        <dbReference type="Rhea" id="RHEA-COMP:16897"/>
        <dbReference type="Rhea" id="RHEA-COMP:17067"/>
        <dbReference type="ChEBI" id="CHEBI:15378"/>
        <dbReference type="ChEBI" id="CHEBI:136412"/>
        <dbReference type="ChEBI" id="CHEBI:157695"/>
        <dbReference type="ChEBI" id="CHEBI:167181"/>
        <dbReference type="EC" id="4.2.99.18"/>
    </reaction>
</comment>
<comment type="cofactor">
    <cofactor evidence="2">
        <name>Zn(2+)</name>
        <dbReference type="ChEBI" id="CHEBI:29105"/>
    </cofactor>
    <text evidence="2">Binds 1 zinc ion per subunit.</text>
</comment>
<comment type="subunit">
    <text evidence="2">Monomer.</text>
</comment>
<comment type="similarity">
    <text evidence="2">Belongs to the FPG family.</text>
</comment>
<organism>
    <name type="scientific">Desulforamulus reducens (strain ATCC BAA-1160 / DSM 100696 / MI-1)</name>
    <name type="common">Desulfotomaculum reducens</name>
    <dbReference type="NCBI Taxonomy" id="349161"/>
    <lineage>
        <taxon>Bacteria</taxon>
        <taxon>Bacillati</taxon>
        <taxon>Bacillota</taxon>
        <taxon>Clostridia</taxon>
        <taxon>Eubacteriales</taxon>
        <taxon>Peptococcaceae</taxon>
        <taxon>Desulforamulus</taxon>
    </lineage>
</organism>
<feature type="initiator methionine" description="Removed" evidence="1">
    <location>
        <position position="1"/>
    </location>
</feature>
<feature type="chain" id="PRO_1000071308" description="Formamidopyrimidine-DNA glycosylase">
    <location>
        <begin position="2"/>
        <end position="277"/>
    </location>
</feature>
<feature type="zinc finger region" description="FPG-type" evidence="2">
    <location>
        <begin position="241"/>
        <end position="275"/>
    </location>
</feature>
<feature type="active site" description="Schiff-base intermediate with DNA" evidence="2">
    <location>
        <position position="2"/>
    </location>
</feature>
<feature type="active site" description="Proton donor" evidence="2">
    <location>
        <position position="3"/>
    </location>
</feature>
<feature type="active site" description="Proton donor; for beta-elimination activity" evidence="2">
    <location>
        <position position="60"/>
    </location>
</feature>
<feature type="active site" description="Proton donor; for delta-elimination activity" evidence="2">
    <location>
        <position position="265"/>
    </location>
</feature>
<feature type="binding site" evidence="2">
    <location>
        <position position="94"/>
    </location>
    <ligand>
        <name>DNA</name>
        <dbReference type="ChEBI" id="CHEBI:16991"/>
    </ligand>
</feature>
<feature type="binding site" evidence="2">
    <location>
        <position position="113"/>
    </location>
    <ligand>
        <name>DNA</name>
        <dbReference type="ChEBI" id="CHEBI:16991"/>
    </ligand>
</feature>
<feature type="binding site" evidence="2">
    <location>
        <position position="156"/>
    </location>
    <ligand>
        <name>DNA</name>
        <dbReference type="ChEBI" id="CHEBI:16991"/>
    </ligand>
</feature>
<sequence length="277" mass="31598">MPELPEVETIVRSLEKHLSGLVITSVDLFKPEVIRTPRVDIFTDQIVGRQFQKKLGRRGKYLLLHMSDGLTLVIHLRMTGRLIYCDADLPLEKHTHVIFHLDNGKQLRFADVRRFGRMSLVPTREVPHLPGIKEMGPEPLDTAFSREYLKKELRRRRTRIKSLLLDQCFVAGLGNIYADEALHEAKIHPERLAPDLTSREASGLHKAIIEVISSGIKHRGTTFRDYVDGEGRSGSYQHQLKVYNREGLPCPHCGKPIQRIKVAGRSSYYCSSCQKAK</sequence>
<reference key="1">
    <citation type="submission" date="2007-03" db="EMBL/GenBank/DDBJ databases">
        <title>Complete sequence of Desulfotomaculum reducens MI-1.</title>
        <authorList>
            <consortium name="US DOE Joint Genome Institute"/>
            <person name="Copeland A."/>
            <person name="Lucas S."/>
            <person name="Lapidus A."/>
            <person name="Barry K."/>
            <person name="Detter J.C."/>
            <person name="Glavina del Rio T."/>
            <person name="Hammon N."/>
            <person name="Israni S."/>
            <person name="Dalin E."/>
            <person name="Tice H."/>
            <person name="Pitluck S."/>
            <person name="Sims D."/>
            <person name="Brettin T."/>
            <person name="Bruce D."/>
            <person name="Han C."/>
            <person name="Tapia R."/>
            <person name="Schmutz J."/>
            <person name="Larimer F."/>
            <person name="Land M."/>
            <person name="Hauser L."/>
            <person name="Kyrpides N."/>
            <person name="Kim E."/>
            <person name="Tebo B.M."/>
            <person name="Richardson P."/>
        </authorList>
    </citation>
    <scope>NUCLEOTIDE SEQUENCE [LARGE SCALE GENOMIC DNA]</scope>
    <source>
        <strain>ATCC BAA-1160 / DSM 100696 / MI-1</strain>
    </source>
</reference>
<accession>A4J4X3</accession>
<protein>
    <recommendedName>
        <fullName evidence="2">Formamidopyrimidine-DNA glycosylase</fullName>
        <shortName evidence="2">Fapy-DNA glycosylase</shortName>
        <ecNumber evidence="2">3.2.2.23</ecNumber>
    </recommendedName>
    <alternativeName>
        <fullName evidence="2">DNA-(apurinic or apyrimidinic site) lyase MutM</fullName>
        <shortName evidence="2">AP lyase MutM</shortName>
        <ecNumber evidence="2">4.2.99.18</ecNumber>
    </alternativeName>
</protein>
<keyword id="KW-0227">DNA damage</keyword>
<keyword id="KW-0234">DNA repair</keyword>
<keyword id="KW-0238">DNA-binding</keyword>
<keyword id="KW-0326">Glycosidase</keyword>
<keyword id="KW-0378">Hydrolase</keyword>
<keyword id="KW-0456">Lyase</keyword>
<keyword id="KW-0479">Metal-binding</keyword>
<keyword id="KW-0511">Multifunctional enzyme</keyword>
<keyword id="KW-1185">Reference proteome</keyword>
<keyword id="KW-0862">Zinc</keyword>
<keyword id="KW-0863">Zinc-finger</keyword>
<name>FPG_DESRM</name>
<evidence type="ECO:0000250" key="1"/>
<evidence type="ECO:0000255" key="2">
    <source>
        <dbReference type="HAMAP-Rule" id="MF_00103"/>
    </source>
</evidence>
<dbReference type="EC" id="3.2.2.23" evidence="2"/>
<dbReference type="EC" id="4.2.99.18" evidence="2"/>
<dbReference type="EMBL" id="CP000612">
    <property type="protein sequence ID" value="ABO50126.1"/>
    <property type="molecule type" value="Genomic_DNA"/>
</dbReference>
<dbReference type="RefSeq" id="WP_011877942.1">
    <property type="nucleotide sequence ID" value="NC_009253.1"/>
</dbReference>
<dbReference type="SMR" id="A4J4X3"/>
<dbReference type="STRING" id="349161.Dred_1598"/>
<dbReference type="KEGG" id="drm:Dred_1598"/>
<dbReference type="eggNOG" id="COG0266">
    <property type="taxonomic scope" value="Bacteria"/>
</dbReference>
<dbReference type="HOGENOM" id="CLU_038423_1_2_9"/>
<dbReference type="OrthoDB" id="9800855at2"/>
<dbReference type="Proteomes" id="UP000001556">
    <property type="component" value="Chromosome"/>
</dbReference>
<dbReference type="GO" id="GO:0034039">
    <property type="term" value="F:8-oxo-7,8-dihydroguanine DNA N-glycosylase activity"/>
    <property type="evidence" value="ECO:0007669"/>
    <property type="project" value="TreeGrafter"/>
</dbReference>
<dbReference type="GO" id="GO:0140078">
    <property type="term" value="F:class I DNA-(apurinic or apyrimidinic site) endonuclease activity"/>
    <property type="evidence" value="ECO:0007669"/>
    <property type="project" value="UniProtKB-EC"/>
</dbReference>
<dbReference type="GO" id="GO:0003684">
    <property type="term" value="F:damaged DNA binding"/>
    <property type="evidence" value="ECO:0007669"/>
    <property type="project" value="InterPro"/>
</dbReference>
<dbReference type="GO" id="GO:0008270">
    <property type="term" value="F:zinc ion binding"/>
    <property type="evidence" value="ECO:0007669"/>
    <property type="project" value="UniProtKB-UniRule"/>
</dbReference>
<dbReference type="GO" id="GO:0006284">
    <property type="term" value="P:base-excision repair"/>
    <property type="evidence" value="ECO:0007669"/>
    <property type="project" value="InterPro"/>
</dbReference>
<dbReference type="CDD" id="cd08966">
    <property type="entry name" value="EcFpg-like_N"/>
    <property type="match status" value="1"/>
</dbReference>
<dbReference type="FunFam" id="1.10.8.50:FF:000003">
    <property type="entry name" value="Formamidopyrimidine-DNA glycosylase"/>
    <property type="match status" value="1"/>
</dbReference>
<dbReference type="Gene3D" id="1.10.8.50">
    <property type="match status" value="1"/>
</dbReference>
<dbReference type="Gene3D" id="3.20.190.10">
    <property type="entry name" value="MutM-like, N-terminal"/>
    <property type="match status" value="1"/>
</dbReference>
<dbReference type="HAMAP" id="MF_00103">
    <property type="entry name" value="Fapy_DNA_glycosyl"/>
    <property type="match status" value="1"/>
</dbReference>
<dbReference type="InterPro" id="IPR015886">
    <property type="entry name" value="DNA_glyclase/AP_lyase_DNA-bd"/>
</dbReference>
<dbReference type="InterPro" id="IPR015887">
    <property type="entry name" value="DNA_glyclase_Znf_dom_DNA_BS"/>
</dbReference>
<dbReference type="InterPro" id="IPR020629">
    <property type="entry name" value="Formamido-pyr_DNA_Glyclase"/>
</dbReference>
<dbReference type="InterPro" id="IPR012319">
    <property type="entry name" value="FPG_cat"/>
</dbReference>
<dbReference type="InterPro" id="IPR035937">
    <property type="entry name" value="MutM-like_N-ter"/>
</dbReference>
<dbReference type="InterPro" id="IPR010979">
    <property type="entry name" value="Ribosomal_uS13-like_H2TH"/>
</dbReference>
<dbReference type="InterPro" id="IPR000214">
    <property type="entry name" value="Znf_DNA_glyclase/AP_lyase"/>
</dbReference>
<dbReference type="InterPro" id="IPR010663">
    <property type="entry name" value="Znf_FPG/IleRS"/>
</dbReference>
<dbReference type="NCBIfam" id="TIGR00577">
    <property type="entry name" value="fpg"/>
    <property type="match status" value="1"/>
</dbReference>
<dbReference type="NCBIfam" id="NF002211">
    <property type="entry name" value="PRK01103.1"/>
    <property type="match status" value="1"/>
</dbReference>
<dbReference type="PANTHER" id="PTHR22993">
    <property type="entry name" value="FORMAMIDOPYRIMIDINE-DNA GLYCOSYLASE"/>
    <property type="match status" value="1"/>
</dbReference>
<dbReference type="PANTHER" id="PTHR22993:SF9">
    <property type="entry name" value="FORMAMIDOPYRIMIDINE-DNA GLYCOSYLASE"/>
    <property type="match status" value="1"/>
</dbReference>
<dbReference type="Pfam" id="PF01149">
    <property type="entry name" value="Fapy_DNA_glyco"/>
    <property type="match status" value="1"/>
</dbReference>
<dbReference type="Pfam" id="PF06831">
    <property type="entry name" value="H2TH"/>
    <property type="match status" value="1"/>
</dbReference>
<dbReference type="Pfam" id="PF06827">
    <property type="entry name" value="zf-FPG_IleRS"/>
    <property type="match status" value="1"/>
</dbReference>
<dbReference type="SMART" id="SM00898">
    <property type="entry name" value="Fapy_DNA_glyco"/>
    <property type="match status" value="1"/>
</dbReference>
<dbReference type="SMART" id="SM01232">
    <property type="entry name" value="H2TH"/>
    <property type="match status" value="1"/>
</dbReference>
<dbReference type="SUPFAM" id="SSF57716">
    <property type="entry name" value="Glucocorticoid receptor-like (DNA-binding domain)"/>
    <property type="match status" value="1"/>
</dbReference>
<dbReference type="SUPFAM" id="SSF81624">
    <property type="entry name" value="N-terminal domain of MutM-like DNA repair proteins"/>
    <property type="match status" value="1"/>
</dbReference>
<dbReference type="SUPFAM" id="SSF46946">
    <property type="entry name" value="S13-like H2TH domain"/>
    <property type="match status" value="1"/>
</dbReference>
<dbReference type="PROSITE" id="PS51068">
    <property type="entry name" value="FPG_CAT"/>
    <property type="match status" value="1"/>
</dbReference>
<dbReference type="PROSITE" id="PS01242">
    <property type="entry name" value="ZF_FPG_1"/>
    <property type="match status" value="1"/>
</dbReference>
<dbReference type="PROSITE" id="PS51066">
    <property type="entry name" value="ZF_FPG_2"/>
    <property type="match status" value="1"/>
</dbReference>
<gene>
    <name evidence="2" type="primary">mutM</name>
    <name evidence="2" type="synonym">fpg</name>
    <name type="ordered locus">Dred_1598</name>
</gene>
<proteinExistence type="inferred from homology"/>